<organism>
    <name type="scientific">Escherichia coli (strain SE11)</name>
    <dbReference type="NCBI Taxonomy" id="409438"/>
    <lineage>
        <taxon>Bacteria</taxon>
        <taxon>Pseudomonadati</taxon>
        <taxon>Pseudomonadota</taxon>
        <taxon>Gammaproteobacteria</taxon>
        <taxon>Enterobacterales</taxon>
        <taxon>Enterobacteriaceae</taxon>
        <taxon>Escherichia</taxon>
    </lineage>
</organism>
<protein>
    <recommendedName>
        <fullName evidence="1">Tryptophan synthase alpha chain</fullName>
        <ecNumber evidence="1">4.2.1.20</ecNumber>
    </recommendedName>
</protein>
<feature type="chain" id="PRO_1000095715" description="Tryptophan synthase alpha chain">
    <location>
        <begin position="1"/>
        <end position="268"/>
    </location>
</feature>
<feature type="active site" description="Proton acceptor" evidence="1">
    <location>
        <position position="49"/>
    </location>
</feature>
<feature type="active site" description="Proton acceptor" evidence="1">
    <location>
        <position position="60"/>
    </location>
</feature>
<comment type="function">
    <text evidence="1">The alpha subunit is responsible for the aldol cleavage of indoleglycerol phosphate to indole and glyceraldehyde 3-phosphate.</text>
</comment>
<comment type="catalytic activity">
    <reaction evidence="1">
        <text>(1S,2R)-1-C-(indol-3-yl)glycerol 3-phosphate + L-serine = D-glyceraldehyde 3-phosphate + L-tryptophan + H2O</text>
        <dbReference type="Rhea" id="RHEA:10532"/>
        <dbReference type="ChEBI" id="CHEBI:15377"/>
        <dbReference type="ChEBI" id="CHEBI:33384"/>
        <dbReference type="ChEBI" id="CHEBI:57912"/>
        <dbReference type="ChEBI" id="CHEBI:58866"/>
        <dbReference type="ChEBI" id="CHEBI:59776"/>
        <dbReference type="EC" id="4.2.1.20"/>
    </reaction>
</comment>
<comment type="pathway">
    <text evidence="1">Amino-acid biosynthesis; L-tryptophan biosynthesis; L-tryptophan from chorismate: step 5/5.</text>
</comment>
<comment type="subunit">
    <text evidence="1">Tetramer of two alpha and two beta chains.</text>
</comment>
<comment type="similarity">
    <text evidence="1">Belongs to the TrpA family.</text>
</comment>
<accession>B6I9X4</accession>
<sequence>MERYESLFAQLKERKEGAFVPFVTLGDPGIEQSLKIIDTLIEAGADALELGIPFSDPLADGPTIQNATLRAFAAGVTPAQCFEMLALIRQKHPTIPIGLLMYANLVFNKGIDEFYAQCEKVGVDSVLVADVPIEESAPFRQAALRHNVAPIFICPPNADDDLLRQIASYGRGYTYLLSRAGVTGAENRAALPLNHLVAKLKEYNAAPPLQGFGISAPDQVKAAIDAGAAGAISGSAIVKIIEQHINEPEKMLAALKVFVQPMKAATRS</sequence>
<keyword id="KW-0028">Amino-acid biosynthesis</keyword>
<keyword id="KW-0057">Aromatic amino acid biosynthesis</keyword>
<keyword id="KW-0456">Lyase</keyword>
<keyword id="KW-0822">Tryptophan biosynthesis</keyword>
<reference key="1">
    <citation type="journal article" date="2008" name="DNA Res.">
        <title>Complete genome sequence and comparative analysis of the wild-type commensal Escherichia coli strain SE11 isolated from a healthy adult.</title>
        <authorList>
            <person name="Oshima K."/>
            <person name="Toh H."/>
            <person name="Ogura Y."/>
            <person name="Sasamoto H."/>
            <person name="Morita H."/>
            <person name="Park S.-H."/>
            <person name="Ooka T."/>
            <person name="Iyoda S."/>
            <person name="Taylor T.D."/>
            <person name="Hayashi T."/>
            <person name="Itoh K."/>
            <person name="Hattori M."/>
        </authorList>
    </citation>
    <scope>NUCLEOTIDE SEQUENCE [LARGE SCALE GENOMIC DNA]</scope>
    <source>
        <strain>SE11</strain>
    </source>
</reference>
<name>TRPA_ECOSE</name>
<evidence type="ECO:0000255" key="1">
    <source>
        <dbReference type="HAMAP-Rule" id="MF_00131"/>
    </source>
</evidence>
<proteinExistence type="inferred from homology"/>
<dbReference type="EC" id="4.2.1.20" evidence="1"/>
<dbReference type="EMBL" id="AP009240">
    <property type="protein sequence ID" value="BAG76833.1"/>
    <property type="molecule type" value="Genomic_DNA"/>
</dbReference>
<dbReference type="RefSeq" id="WP_000443056.1">
    <property type="nucleotide sequence ID" value="NC_011415.1"/>
</dbReference>
<dbReference type="SMR" id="B6I9X4"/>
<dbReference type="GeneID" id="75203372"/>
<dbReference type="KEGG" id="ecy:ECSE_1309"/>
<dbReference type="HOGENOM" id="CLU_016734_0_4_6"/>
<dbReference type="UniPathway" id="UPA00035">
    <property type="reaction ID" value="UER00044"/>
</dbReference>
<dbReference type="Proteomes" id="UP000008199">
    <property type="component" value="Chromosome"/>
</dbReference>
<dbReference type="GO" id="GO:0005829">
    <property type="term" value="C:cytosol"/>
    <property type="evidence" value="ECO:0007669"/>
    <property type="project" value="TreeGrafter"/>
</dbReference>
<dbReference type="GO" id="GO:0004834">
    <property type="term" value="F:tryptophan synthase activity"/>
    <property type="evidence" value="ECO:0007669"/>
    <property type="project" value="UniProtKB-UniRule"/>
</dbReference>
<dbReference type="CDD" id="cd04724">
    <property type="entry name" value="Tryptophan_synthase_alpha"/>
    <property type="match status" value="1"/>
</dbReference>
<dbReference type="FunFam" id="3.20.20.70:FF:000037">
    <property type="entry name" value="Tryptophan synthase alpha chain"/>
    <property type="match status" value="1"/>
</dbReference>
<dbReference type="Gene3D" id="3.20.20.70">
    <property type="entry name" value="Aldolase class I"/>
    <property type="match status" value="1"/>
</dbReference>
<dbReference type="HAMAP" id="MF_00131">
    <property type="entry name" value="Trp_synth_alpha"/>
    <property type="match status" value="1"/>
</dbReference>
<dbReference type="InterPro" id="IPR013785">
    <property type="entry name" value="Aldolase_TIM"/>
</dbReference>
<dbReference type="InterPro" id="IPR011060">
    <property type="entry name" value="RibuloseP-bd_barrel"/>
</dbReference>
<dbReference type="InterPro" id="IPR018204">
    <property type="entry name" value="Trp_synthase_alpha_AS"/>
</dbReference>
<dbReference type="InterPro" id="IPR002028">
    <property type="entry name" value="Trp_synthase_suA"/>
</dbReference>
<dbReference type="NCBIfam" id="TIGR00262">
    <property type="entry name" value="trpA"/>
    <property type="match status" value="1"/>
</dbReference>
<dbReference type="PANTHER" id="PTHR43406:SF1">
    <property type="entry name" value="TRYPTOPHAN SYNTHASE ALPHA CHAIN, CHLOROPLASTIC"/>
    <property type="match status" value="1"/>
</dbReference>
<dbReference type="PANTHER" id="PTHR43406">
    <property type="entry name" value="TRYPTOPHAN SYNTHASE, ALPHA CHAIN"/>
    <property type="match status" value="1"/>
</dbReference>
<dbReference type="Pfam" id="PF00290">
    <property type="entry name" value="Trp_syntA"/>
    <property type="match status" value="1"/>
</dbReference>
<dbReference type="SUPFAM" id="SSF51366">
    <property type="entry name" value="Ribulose-phoshate binding barrel"/>
    <property type="match status" value="1"/>
</dbReference>
<dbReference type="PROSITE" id="PS00167">
    <property type="entry name" value="TRP_SYNTHASE_ALPHA"/>
    <property type="match status" value="1"/>
</dbReference>
<gene>
    <name evidence="1" type="primary">trpA</name>
    <name type="ordered locus">ECSE_1309</name>
</gene>